<organism>
    <name type="scientific">Leptospira borgpetersenii serovar Hardjo-bovis (strain JB197)</name>
    <dbReference type="NCBI Taxonomy" id="355277"/>
    <lineage>
        <taxon>Bacteria</taxon>
        <taxon>Pseudomonadati</taxon>
        <taxon>Spirochaetota</taxon>
        <taxon>Spirochaetia</taxon>
        <taxon>Leptospirales</taxon>
        <taxon>Leptospiraceae</taxon>
        <taxon>Leptospira</taxon>
    </lineage>
</organism>
<proteinExistence type="inferred from homology"/>
<reference key="1">
    <citation type="journal article" date="2006" name="Proc. Natl. Acad. Sci. U.S.A.">
        <title>Genome reduction in Leptospira borgpetersenii reflects limited transmission potential.</title>
        <authorList>
            <person name="Bulach D.M."/>
            <person name="Zuerner R.L."/>
            <person name="Wilson P."/>
            <person name="Seemann T."/>
            <person name="McGrath A."/>
            <person name="Cullen P.A."/>
            <person name="Davis J."/>
            <person name="Johnson M."/>
            <person name="Kuczek E."/>
            <person name="Alt D.P."/>
            <person name="Peterson-Burch B."/>
            <person name="Coppel R.L."/>
            <person name="Rood J.I."/>
            <person name="Davies J.K."/>
            <person name="Adler B."/>
        </authorList>
    </citation>
    <scope>NUCLEOTIDE SEQUENCE [LARGE SCALE GENOMIC DNA]</scope>
    <source>
        <strain>JB197</strain>
    </source>
</reference>
<name>RIMM_LEPBJ</name>
<gene>
    <name evidence="1" type="primary">rimM</name>
    <name type="ordered locus">LBJ_1434</name>
</gene>
<feature type="chain" id="PRO_1000001190" description="Ribosome maturation factor RimM">
    <location>
        <begin position="1"/>
        <end position="176"/>
    </location>
</feature>
<feature type="domain" description="PRC barrel" evidence="1">
    <location>
        <begin position="99"/>
        <end position="174"/>
    </location>
</feature>
<protein>
    <recommendedName>
        <fullName evidence="1">Ribosome maturation factor RimM</fullName>
    </recommendedName>
</protein>
<keyword id="KW-0143">Chaperone</keyword>
<keyword id="KW-0963">Cytoplasm</keyword>
<keyword id="KW-0690">Ribosome biogenesis</keyword>
<keyword id="KW-0698">rRNA processing</keyword>
<evidence type="ECO:0000255" key="1">
    <source>
        <dbReference type="HAMAP-Rule" id="MF_00014"/>
    </source>
</evidence>
<sequence length="176" mass="20197">MTEGWISLGQLGKPFGIKGWLRFNVRDSILTKVKLPVRLKLGKSDPNFPETEIILLEIRPHNGKFVVRFEGIATPEEAEKWVGGILFLPQNLLPKIETKDEFYVRDLIGLQAIDEFGKSLNWKLTDIQDNPAHPILVFSKSEEEEILIPFLHVFVGELNLEKKTIVLIQPELWNEV</sequence>
<comment type="function">
    <text evidence="1">An accessory protein needed during the final step in the assembly of 30S ribosomal subunit, possibly for assembly of the head region. Essential for efficient processing of 16S rRNA. May be needed both before and after RbfA during the maturation of 16S rRNA. It has affinity for free ribosomal 30S subunits but not for 70S ribosomes.</text>
</comment>
<comment type="subunit">
    <text evidence="1">Binds ribosomal protein uS19.</text>
</comment>
<comment type="subcellular location">
    <subcellularLocation>
        <location evidence="1">Cytoplasm</location>
    </subcellularLocation>
</comment>
<comment type="domain">
    <text evidence="1">The PRC barrel domain binds ribosomal protein uS19.</text>
</comment>
<comment type="similarity">
    <text evidence="1">Belongs to the RimM family.</text>
</comment>
<accession>Q04SW3</accession>
<dbReference type="EMBL" id="CP000350">
    <property type="protein sequence ID" value="ABJ76007.1"/>
    <property type="molecule type" value="Genomic_DNA"/>
</dbReference>
<dbReference type="RefSeq" id="WP_004278755.1">
    <property type="nucleotide sequence ID" value="NC_008510.1"/>
</dbReference>
<dbReference type="SMR" id="Q04SW3"/>
<dbReference type="KEGG" id="lbj:LBJ_1434"/>
<dbReference type="HOGENOM" id="CLU_077636_1_0_12"/>
<dbReference type="Proteomes" id="UP000000656">
    <property type="component" value="Chromosome 1"/>
</dbReference>
<dbReference type="GO" id="GO:0005737">
    <property type="term" value="C:cytoplasm"/>
    <property type="evidence" value="ECO:0007669"/>
    <property type="project" value="UniProtKB-SubCell"/>
</dbReference>
<dbReference type="GO" id="GO:0005840">
    <property type="term" value="C:ribosome"/>
    <property type="evidence" value="ECO:0007669"/>
    <property type="project" value="InterPro"/>
</dbReference>
<dbReference type="GO" id="GO:0043022">
    <property type="term" value="F:ribosome binding"/>
    <property type="evidence" value="ECO:0007669"/>
    <property type="project" value="InterPro"/>
</dbReference>
<dbReference type="GO" id="GO:0042274">
    <property type="term" value="P:ribosomal small subunit biogenesis"/>
    <property type="evidence" value="ECO:0007669"/>
    <property type="project" value="UniProtKB-UniRule"/>
</dbReference>
<dbReference type="GO" id="GO:0006364">
    <property type="term" value="P:rRNA processing"/>
    <property type="evidence" value="ECO:0007669"/>
    <property type="project" value="UniProtKB-UniRule"/>
</dbReference>
<dbReference type="Gene3D" id="2.30.30.240">
    <property type="entry name" value="PRC-barrel domain"/>
    <property type="match status" value="1"/>
</dbReference>
<dbReference type="Gene3D" id="2.40.30.60">
    <property type="entry name" value="RimM"/>
    <property type="match status" value="1"/>
</dbReference>
<dbReference type="HAMAP" id="MF_00014">
    <property type="entry name" value="Ribosome_mat_RimM"/>
    <property type="match status" value="1"/>
</dbReference>
<dbReference type="InterPro" id="IPR011033">
    <property type="entry name" value="PRC_barrel-like_sf"/>
</dbReference>
<dbReference type="InterPro" id="IPR056792">
    <property type="entry name" value="PRC_RimM"/>
</dbReference>
<dbReference type="InterPro" id="IPR011961">
    <property type="entry name" value="RimM"/>
</dbReference>
<dbReference type="InterPro" id="IPR002676">
    <property type="entry name" value="RimM_N"/>
</dbReference>
<dbReference type="InterPro" id="IPR036976">
    <property type="entry name" value="RimM_N_sf"/>
</dbReference>
<dbReference type="InterPro" id="IPR009000">
    <property type="entry name" value="Transl_B-barrel_sf"/>
</dbReference>
<dbReference type="NCBIfam" id="TIGR02273">
    <property type="entry name" value="16S_RimM"/>
    <property type="match status" value="1"/>
</dbReference>
<dbReference type="NCBIfam" id="NF011184">
    <property type="entry name" value="PRK14590.1"/>
    <property type="match status" value="1"/>
</dbReference>
<dbReference type="PANTHER" id="PTHR33692">
    <property type="entry name" value="RIBOSOME MATURATION FACTOR RIMM"/>
    <property type="match status" value="1"/>
</dbReference>
<dbReference type="PANTHER" id="PTHR33692:SF1">
    <property type="entry name" value="RIBOSOME MATURATION FACTOR RIMM"/>
    <property type="match status" value="1"/>
</dbReference>
<dbReference type="Pfam" id="PF24986">
    <property type="entry name" value="PRC_RimM"/>
    <property type="match status" value="1"/>
</dbReference>
<dbReference type="Pfam" id="PF01782">
    <property type="entry name" value="RimM"/>
    <property type="match status" value="1"/>
</dbReference>
<dbReference type="SUPFAM" id="SSF50346">
    <property type="entry name" value="PRC-barrel domain"/>
    <property type="match status" value="1"/>
</dbReference>
<dbReference type="SUPFAM" id="SSF50447">
    <property type="entry name" value="Translation proteins"/>
    <property type="match status" value="1"/>
</dbReference>